<dbReference type="EMBL" id="CP000259">
    <property type="protein sequence ID" value="ABF31251.1"/>
    <property type="molecule type" value="Genomic_DNA"/>
</dbReference>
<dbReference type="RefSeq" id="WP_002986622.1">
    <property type="nucleotide sequence ID" value="NC_008021.1"/>
</dbReference>
<dbReference type="SMR" id="Q1JNZ8"/>
<dbReference type="GeneID" id="69900045"/>
<dbReference type="KEGG" id="spk:MGAS9429_Spy0063"/>
<dbReference type="HOGENOM" id="CLU_055188_4_2_9"/>
<dbReference type="Proteomes" id="UP000002433">
    <property type="component" value="Chromosome"/>
</dbReference>
<dbReference type="GO" id="GO:0022625">
    <property type="term" value="C:cytosolic large ribosomal subunit"/>
    <property type="evidence" value="ECO:0007669"/>
    <property type="project" value="TreeGrafter"/>
</dbReference>
<dbReference type="GO" id="GO:0019843">
    <property type="term" value="F:rRNA binding"/>
    <property type="evidence" value="ECO:0007669"/>
    <property type="project" value="UniProtKB-UniRule"/>
</dbReference>
<dbReference type="GO" id="GO:0003735">
    <property type="term" value="F:structural constituent of ribosome"/>
    <property type="evidence" value="ECO:0007669"/>
    <property type="project" value="InterPro"/>
</dbReference>
<dbReference type="GO" id="GO:0006412">
    <property type="term" value="P:translation"/>
    <property type="evidence" value="ECO:0007669"/>
    <property type="project" value="UniProtKB-UniRule"/>
</dbReference>
<dbReference type="Gene3D" id="3.100.10.10">
    <property type="match status" value="1"/>
</dbReference>
<dbReference type="HAMAP" id="MF_01341">
    <property type="entry name" value="Ribosomal_uL15"/>
    <property type="match status" value="1"/>
</dbReference>
<dbReference type="InterPro" id="IPR030878">
    <property type="entry name" value="Ribosomal_uL15"/>
</dbReference>
<dbReference type="InterPro" id="IPR021131">
    <property type="entry name" value="Ribosomal_uL15/eL18"/>
</dbReference>
<dbReference type="InterPro" id="IPR036227">
    <property type="entry name" value="Ribosomal_uL15/eL18_sf"/>
</dbReference>
<dbReference type="InterPro" id="IPR005749">
    <property type="entry name" value="Ribosomal_uL15_bac-type"/>
</dbReference>
<dbReference type="InterPro" id="IPR001196">
    <property type="entry name" value="Ribosomal_uL15_CS"/>
</dbReference>
<dbReference type="NCBIfam" id="TIGR01071">
    <property type="entry name" value="rplO_bact"/>
    <property type="match status" value="1"/>
</dbReference>
<dbReference type="PANTHER" id="PTHR12934">
    <property type="entry name" value="50S RIBOSOMAL PROTEIN L15"/>
    <property type="match status" value="1"/>
</dbReference>
<dbReference type="PANTHER" id="PTHR12934:SF11">
    <property type="entry name" value="LARGE RIBOSOMAL SUBUNIT PROTEIN UL15M"/>
    <property type="match status" value="1"/>
</dbReference>
<dbReference type="Pfam" id="PF00828">
    <property type="entry name" value="Ribosomal_L27A"/>
    <property type="match status" value="1"/>
</dbReference>
<dbReference type="SUPFAM" id="SSF52080">
    <property type="entry name" value="Ribosomal proteins L15p and L18e"/>
    <property type="match status" value="1"/>
</dbReference>
<dbReference type="PROSITE" id="PS00475">
    <property type="entry name" value="RIBOSOMAL_L15"/>
    <property type="match status" value="1"/>
</dbReference>
<protein>
    <recommendedName>
        <fullName evidence="1">Large ribosomal subunit protein uL15</fullName>
    </recommendedName>
    <alternativeName>
        <fullName evidence="3">50S ribosomal protein L15</fullName>
    </alternativeName>
</protein>
<name>RL15_STRPC</name>
<keyword id="KW-0687">Ribonucleoprotein</keyword>
<keyword id="KW-0689">Ribosomal protein</keyword>
<keyword id="KW-0694">RNA-binding</keyword>
<keyword id="KW-0699">rRNA-binding</keyword>
<comment type="function">
    <text evidence="1">Binds to the 23S rRNA.</text>
</comment>
<comment type="subunit">
    <text evidence="1">Part of the 50S ribosomal subunit.</text>
</comment>
<comment type="similarity">
    <text evidence="1">Belongs to the universal ribosomal protein uL15 family.</text>
</comment>
<sequence>MKLHELKAAEGSRKVRNRVGRGTSSGNGKTSGRGQKGQKARSGGGVRLGFEGGQTPLFRRIPKRGFTNINTKEYALVNLDQLNVFDDGTEVTPAILKDAGIVRAEKSGVKVLGNGELTKKLTVKAAKFSKSAEAAIIAKGGSIEVI</sequence>
<feature type="chain" id="PRO_0000251570" description="Large ribosomal subunit protein uL15">
    <location>
        <begin position="1"/>
        <end position="146"/>
    </location>
</feature>
<feature type="region of interest" description="Disordered" evidence="2">
    <location>
        <begin position="1"/>
        <end position="51"/>
    </location>
</feature>
<feature type="compositionally biased region" description="Basic and acidic residues" evidence="2">
    <location>
        <begin position="1"/>
        <end position="13"/>
    </location>
</feature>
<feature type="compositionally biased region" description="Gly residues" evidence="2">
    <location>
        <begin position="23"/>
        <end position="35"/>
    </location>
</feature>
<feature type="compositionally biased region" description="Gly residues" evidence="2">
    <location>
        <begin position="42"/>
        <end position="51"/>
    </location>
</feature>
<organism>
    <name type="scientific">Streptococcus pyogenes serotype M12 (strain MGAS9429)</name>
    <dbReference type="NCBI Taxonomy" id="370551"/>
    <lineage>
        <taxon>Bacteria</taxon>
        <taxon>Bacillati</taxon>
        <taxon>Bacillota</taxon>
        <taxon>Bacilli</taxon>
        <taxon>Lactobacillales</taxon>
        <taxon>Streptococcaceae</taxon>
        <taxon>Streptococcus</taxon>
    </lineage>
</organism>
<evidence type="ECO:0000255" key="1">
    <source>
        <dbReference type="HAMAP-Rule" id="MF_01341"/>
    </source>
</evidence>
<evidence type="ECO:0000256" key="2">
    <source>
        <dbReference type="SAM" id="MobiDB-lite"/>
    </source>
</evidence>
<evidence type="ECO:0000305" key="3"/>
<accession>Q1JNZ8</accession>
<proteinExistence type="inferred from homology"/>
<reference key="1">
    <citation type="journal article" date="2006" name="Proc. Natl. Acad. Sci. U.S.A.">
        <title>Molecular genetic anatomy of inter- and intraserotype variation in the human bacterial pathogen group A Streptococcus.</title>
        <authorList>
            <person name="Beres S.B."/>
            <person name="Richter E.W."/>
            <person name="Nagiec M.J."/>
            <person name="Sumby P."/>
            <person name="Porcella S.F."/>
            <person name="DeLeo F.R."/>
            <person name="Musser J.M."/>
        </authorList>
    </citation>
    <scope>NUCLEOTIDE SEQUENCE [LARGE SCALE GENOMIC DNA]</scope>
    <source>
        <strain>MGAS9429</strain>
    </source>
</reference>
<gene>
    <name evidence="1" type="primary">rplO</name>
    <name type="ordered locus">MGAS9429_Spy0063</name>
</gene>